<gene>
    <name evidence="15" type="primary">Txnrd2</name>
    <name type="synonym">Trxr2</name>
</gene>
<feature type="transit peptide" description="Mitochondrion" evidence="8">
    <location>
        <begin position="1"/>
        <end position="34"/>
    </location>
</feature>
<feature type="chain" id="PRO_0000030289" description="Thioredoxin reductase 2, mitochondrial">
    <location>
        <begin position="35"/>
        <end position="524"/>
    </location>
</feature>
<feature type="active site" description="Proton acceptor" evidence="1">
    <location>
        <position position="497"/>
    </location>
</feature>
<feature type="binding site" evidence="1">
    <location>
        <begin position="41"/>
        <end position="70"/>
    </location>
    <ligand>
        <name>FAD</name>
        <dbReference type="ChEBI" id="CHEBI:57692"/>
    </ligand>
</feature>
<feature type="non-standard amino acid" description="Selenocysteine" evidence="1">
    <location>
        <position position="523"/>
    </location>
</feature>
<feature type="modified residue" description="N6-succinyllysine" evidence="16">
    <location>
        <position position="79"/>
    </location>
</feature>
<feature type="modified residue" description="N6-succinyllysine" evidence="16">
    <location>
        <position position="175"/>
    </location>
</feature>
<feature type="modified residue" description="N6-succinyllysine" evidence="16">
    <location>
        <position position="329"/>
    </location>
</feature>
<feature type="disulfide bond" description="Redox-active" evidence="1">
    <location>
        <begin position="86"/>
        <end position="91"/>
    </location>
</feature>
<feature type="cross-link" description="Cysteinyl-selenocysteine (Cys-Sec)" evidence="1">
    <location>
        <begin position="522"/>
        <end position="523"/>
    </location>
</feature>
<feature type="splice variant" id="VSP_008293" description="In isoform 2." evidence="13">
    <original>MVAAMVAALRGPSRRFRPRTRALTRGTRGAASAAGG</original>
    <variation>MEG</variation>
    <location>
        <begin position="1"/>
        <end position="36"/>
    </location>
</feature>
<feature type="splice variant" id="VSP_008294" description="In isoform 3." evidence="12">
    <original>RVPETRTLNLEKAGISTNPKNQKIIVDAQEATSVPHIYA</original>
    <variation>KDAASHTDTVSSSRKPYFLGRRVFAFLPITSWILHSAGS</variation>
    <location>
        <begin position="318"/>
        <end position="356"/>
    </location>
</feature>
<feature type="splice variant" id="VSP_008295" description="In isoform 3." evidence="12">
    <location>
        <begin position="357"/>
        <end position="524"/>
    </location>
</feature>
<feature type="splice variant" id="VSP_008296" description="In isoform 4." evidence="11">
    <location>
        <begin position="395"/>
        <end position="425"/>
    </location>
</feature>
<feature type="sequence conflict" description="In Ref. 1; AAF03359." evidence="13" ref="1">
    <original>AMV</original>
    <variation>GRMW</variation>
    <location>
        <begin position="4"/>
        <end position="6"/>
    </location>
</feature>
<feature type="strand" evidence="19">
    <location>
        <begin position="39"/>
        <end position="45"/>
    </location>
</feature>
<feature type="helix" evidence="19">
    <location>
        <begin position="49"/>
        <end position="60"/>
    </location>
</feature>
<feature type="strand" evidence="19">
    <location>
        <begin position="65"/>
        <end position="68"/>
    </location>
</feature>
<feature type="helix" evidence="19">
    <location>
        <begin position="85"/>
        <end position="89"/>
    </location>
</feature>
<feature type="helix" evidence="19">
    <location>
        <begin position="91"/>
        <end position="112"/>
    </location>
</feature>
<feature type="helix" evidence="19">
    <location>
        <begin position="125"/>
        <end position="149"/>
    </location>
</feature>
<feature type="strand" evidence="19">
    <location>
        <begin position="153"/>
        <end position="155"/>
    </location>
</feature>
<feature type="strand" evidence="19">
    <location>
        <begin position="158"/>
        <end position="170"/>
    </location>
</feature>
<feature type="strand" evidence="19">
    <location>
        <begin position="176"/>
        <end position="186"/>
    </location>
</feature>
<feature type="strand" evidence="19">
    <location>
        <begin position="190"/>
        <end position="192"/>
    </location>
</feature>
<feature type="helix" evidence="19">
    <location>
        <begin position="201"/>
        <end position="204"/>
    </location>
</feature>
<feature type="helix" evidence="19">
    <location>
        <begin position="208"/>
        <end position="211"/>
    </location>
</feature>
<feature type="strand" evidence="19">
    <location>
        <begin position="220"/>
        <end position="224"/>
    </location>
</feature>
<feature type="helix" evidence="19">
    <location>
        <begin position="228"/>
        <end position="239"/>
    </location>
</feature>
<feature type="strand" evidence="19">
    <location>
        <begin position="244"/>
        <end position="250"/>
    </location>
</feature>
<feature type="turn" evidence="17">
    <location>
        <begin position="252"/>
        <end position="255"/>
    </location>
</feature>
<feature type="helix" evidence="19">
    <location>
        <begin position="258"/>
        <end position="270"/>
    </location>
</feature>
<feature type="strand" evidence="19">
    <location>
        <begin position="274"/>
        <end position="277"/>
    </location>
</feature>
<feature type="strand" evidence="19">
    <location>
        <begin position="279"/>
        <end position="286"/>
    </location>
</feature>
<feature type="strand" evidence="19">
    <location>
        <begin position="292"/>
        <end position="298"/>
    </location>
</feature>
<feature type="turn" evidence="19">
    <location>
        <begin position="299"/>
        <end position="301"/>
    </location>
</feature>
<feature type="strand" evidence="19">
    <location>
        <begin position="304"/>
        <end position="314"/>
    </location>
</feature>
<feature type="strand" evidence="19">
    <location>
        <begin position="318"/>
        <end position="321"/>
    </location>
</feature>
<feature type="helix" evidence="19">
    <location>
        <begin position="323"/>
        <end position="325"/>
    </location>
</feature>
<feature type="helix" evidence="19">
    <location>
        <begin position="327"/>
        <end position="330"/>
    </location>
</feature>
<feature type="strand" evidence="19">
    <location>
        <begin position="336"/>
        <end position="338"/>
    </location>
</feature>
<feature type="strand" evidence="17">
    <location>
        <begin position="345"/>
        <end position="348"/>
    </location>
</feature>
<feature type="strand" evidence="19">
    <location>
        <begin position="354"/>
        <end position="356"/>
    </location>
</feature>
<feature type="helix" evidence="19">
    <location>
        <begin position="358"/>
        <end position="360"/>
    </location>
</feature>
<feature type="strand" evidence="18">
    <location>
        <begin position="361"/>
        <end position="364"/>
    </location>
</feature>
<feature type="helix" evidence="19">
    <location>
        <begin position="368"/>
        <end position="383"/>
    </location>
</feature>
<feature type="strand" evidence="19">
    <location>
        <begin position="397"/>
        <end position="399"/>
    </location>
</feature>
<feature type="strand" evidence="19">
    <location>
        <begin position="401"/>
        <end position="409"/>
    </location>
</feature>
<feature type="helix" evidence="19">
    <location>
        <begin position="412"/>
        <end position="419"/>
    </location>
</feature>
<feature type="helix" evidence="19">
    <location>
        <begin position="421"/>
        <end position="423"/>
    </location>
</feature>
<feature type="strand" evidence="19">
    <location>
        <begin position="424"/>
        <end position="430"/>
    </location>
</feature>
<feature type="helix" evidence="19">
    <location>
        <begin position="434"/>
        <end position="438"/>
    </location>
</feature>
<feature type="strand" evidence="19">
    <location>
        <begin position="447"/>
        <end position="455"/>
    </location>
</feature>
<feature type="strand" evidence="19">
    <location>
        <begin position="459"/>
        <end position="467"/>
    </location>
</feature>
<feature type="helix" evidence="19">
    <location>
        <begin position="470"/>
        <end position="482"/>
    </location>
</feature>
<feature type="helix" evidence="19">
    <location>
        <begin position="487"/>
        <end position="491"/>
    </location>
</feature>
<feature type="helix" evidence="19">
    <location>
        <begin position="502"/>
        <end position="505"/>
    </location>
</feature>
<feature type="turn" evidence="19">
    <location>
        <begin position="511"/>
        <end position="514"/>
    </location>
</feature>
<name>TRXR2_MOUSE</name>
<accession>Q9JLT4</accession>
<accession>Q6KG49</accession>
<accession>Q80VZ4</accession>
<accession>Q91YX4</accession>
<accession>Q9JHA7</accession>
<accession>Q9JMH5</accession>
<comment type="function">
    <text evidence="4 5">Involved in the control of reactive oxygen species levels and the regulation of mitochondrial redox homeostasis (By similarity). Maintains thioredoxin in a reduced state. May play a role in redox-regulated cell signaling (By similarity).</text>
</comment>
<comment type="catalytic activity">
    <reaction evidence="3 5">
        <text>[thioredoxin]-dithiol + NADP(+) = [thioredoxin]-disulfide + NADPH + H(+)</text>
        <dbReference type="Rhea" id="RHEA:20345"/>
        <dbReference type="Rhea" id="RHEA-COMP:10698"/>
        <dbReference type="Rhea" id="RHEA-COMP:10700"/>
        <dbReference type="ChEBI" id="CHEBI:15378"/>
        <dbReference type="ChEBI" id="CHEBI:29950"/>
        <dbReference type="ChEBI" id="CHEBI:50058"/>
        <dbReference type="ChEBI" id="CHEBI:57783"/>
        <dbReference type="ChEBI" id="CHEBI:58349"/>
        <dbReference type="EC" id="1.8.1.9"/>
    </reaction>
    <physiologicalReaction direction="right-to-left" evidence="3 5">
        <dbReference type="Rhea" id="RHEA:20347"/>
    </physiologicalReaction>
</comment>
<comment type="cofactor">
    <cofactor evidence="7 13">
        <name>FAD</name>
        <dbReference type="ChEBI" id="CHEBI:57692"/>
    </cofactor>
</comment>
<comment type="subunit">
    <text evidence="2">Homodimer.</text>
</comment>
<comment type="subcellular location">
    <subcellularLocation>
        <location evidence="10">Mitochondrion</location>
    </subcellularLocation>
</comment>
<comment type="alternative products">
    <event type="alternative splicing"/>
    <isoform>
        <id>Q9JLT4-1</id>
        <name>1</name>
        <sequence type="displayed"/>
    </isoform>
    <isoform>
        <id>Q9JLT4-2</id>
        <name>2</name>
        <sequence type="described" ref="VSP_008293"/>
    </isoform>
    <isoform>
        <id>Q9JLT4-3</id>
        <name>3</name>
        <sequence type="described" ref="VSP_008294 VSP_008295"/>
    </isoform>
    <isoform>
        <id>Q9JLT4-4</id>
        <name>4</name>
        <sequence type="described" ref="VSP_008296"/>
    </isoform>
</comment>
<comment type="tissue specificity">
    <text evidence="8 9 10">Expressed in liver, heart, testis and kidney.</text>
</comment>
<comment type="miscellaneous">
    <text evidence="6">The active site is a redox-active disulfide bond. The selenocysteine residue is also essential for catalytic activity (By similarity).</text>
</comment>
<comment type="similarity">
    <text evidence="13">Belongs to the class-I pyridine nucleotide-disulfide oxidoreductase family.</text>
</comment>
<comment type="sequence caution" evidence="13">
    <conflict type="erroneous initiation">
        <sequence resource="EMBL-CDS" id="AAF03359"/>
    </conflict>
    <text>Extended N-terminus.</text>
</comment>
<comment type="sequence caution" evidence="13">
    <conflict type="erroneous initiation">
        <sequence resource="EMBL-CDS" id="AAH52157"/>
    </conflict>
    <text>Extended N-terminus.</text>
</comment>
<comment type="sequence caution" evidence="13">
    <conflict type="erroneous initiation">
        <sequence resource="EMBL-CDS" id="AAL90457"/>
    </conflict>
    <text>Extended N-terminus.</text>
</comment>
<comment type="sequence caution" evidence="13">
    <conflict type="erroneous initiation">
        <sequence resource="EMBL-CDS" id="AAQ03230"/>
    </conflict>
    <text>Extended N-terminus.</text>
</comment>
<comment type="sequence caution" evidence="13">
    <conflict type="erroneous initiation">
        <sequence resource="EMBL-CDS" id="BAA86986"/>
    </conflict>
    <text>Extended N-terminus.</text>
</comment>
<keyword id="KW-0002">3D-structure</keyword>
<keyword id="KW-0025">Alternative splicing</keyword>
<keyword id="KW-0903">Direct protein sequencing</keyword>
<keyword id="KW-1015">Disulfide bond</keyword>
<keyword id="KW-0274">FAD</keyword>
<keyword id="KW-0285">Flavoprotein</keyword>
<keyword id="KW-0496">Mitochondrion</keyword>
<keyword id="KW-0521">NADP</keyword>
<keyword id="KW-0560">Oxidoreductase</keyword>
<keyword id="KW-0676">Redox-active center</keyword>
<keyword id="KW-1185">Reference proteome</keyword>
<keyword id="KW-0712">Selenocysteine</keyword>
<keyword id="KW-0809">Transit peptide</keyword>
<evidence type="ECO:0000250" key="1"/>
<evidence type="ECO:0000250" key="2">
    <source>
        <dbReference type="UniProtKB" id="P38816"/>
    </source>
</evidence>
<evidence type="ECO:0000250" key="3">
    <source>
        <dbReference type="UniProtKB" id="Q9N2I8"/>
    </source>
</evidence>
<evidence type="ECO:0000250" key="4">
    <source>
        <dbReference type="UniProtKB" id="Q9NNW7"/>
    </source>
</evidence>
<evidence type="ECO:0000250" key="5">
    <source>
        <dbReference type="UniProtKB" id="Q9Z0J5"/>
    </source>
</evidence>
<evidence type="ECO:0000250" key="6">
    <source>
        <dbReference type="UniProtKB" id="Q9ZOJ5"/>
    </source>
</evidence>
<evidence type="ECO:0000255" key="7">
    <source>
        <dbReference type="RuleBase" id="RU000402"/>
    </source>
</evidence>
<evidence type="ECO:0000269" key="8">
    <source>
    </source>
</evidence>
<evidence type="ECO:0000269" key="9">
    <source>
    </source>
</evidence>
<evidence type="ECO:0000269" key="10">
    <source>
    </source>
</evidence>
<evidence type="ECO:0000303" key="11">
    <source>
    </source>
</evidence>
<evidence type="ECO:0000303" key="12">
    <source>
    </source>
</evidence>
<evidence type="ECO:0000305" key="13"/>
<evidence type="ECO:0000312" key="14">
    <source>
        <dbReference type="EMBL" id="AAD51323.1"/>
    </source>
</evidence>
<evidence type="ECO:0000312" key="15">
    <source>
        <dbReference type="MGI" id="MGI:1347023"/>
    </source>
</evidence>
<evidence type="ECO:0007744" key="16">
    <source>
    </source>
</evidence>
<evidence type="ECO:0007829" key="17">
    <source>
        <dbReference type="PDB" id="1ZDL"/>
    </source>
</evidence>
<evidence type="ECO:0007829" key="18">
    <source>
        <dbReference type="PDB" id="1ZKQ"/>
    </source>
</evidence>
<evidence type="ECO:0007829" key="19">
    <source>
        <dbReference type="PDB" id="3DGZ"/>
    </source>
</evidence>
<dbReference type="EC" id="1.8.1.9" evidence="3 5"/>
<dbReference type="EMBL" id="AF136399">
    <property type="protein sequence ID" value="AAF03359.1"/>
    <property type="status" value="ALT_INIT"/>
    <property type="molecule type" value="mRNA"/>
</dbReference>
<dbReference type="EMBL" id="AF171053">
    <property type="protein sequence ID" value="AAD51323.1"/>
    <property type="molecule type" value="mRNA"/>
</dbReference>
<dbReference type="EMBL" id="AB027566">
    <property type="protein sequence ID" value="BAA86986.2"/>
    <property type="status" value="ALT_INIT"/>
    <property type="molecule type" value="mRNA"/>
</dbReference>
<dbReference type="EMBL" id="AF414359">
    <property type="protein sequence ID" value="AAL90457.1"/>
    <property type="status" value="ALT_INIT"/>
    <property type="molecule type" value="Genomic_DNA"/>
</dbReference>
<dbReference type="EMBL" id="AF414356">
    <property type="protein sequence ID" value="AAL90457.1"/>
    <property type="status" value="JOINED"/>
    <property type="molecule type" value="Genomic_DNA"/>
</dbReference>
<dbReference type="EMBL" id="AF414357">
    <property type="protein sequence ID" value="AAL90457.1"/>
    <property type="status" value="JOINED"/>
    <property type="molecule type" value="Genomic_DNA"/>
</dbReference>
<dbReference type="EMBL" id="AF414358">
    <property type="protein sequence ID" value="AAL90457.1"/>
    <property type="status" value="JOINED"/>
    <property type="molecule type" value="Genomic_DNA"/>
</dbReference>
<dbReference type="EMBL" id="AF412308">
    <property type="protein sequence ID" value="AAQ03230.1"/>
    <property type="status" value="ALT_INIT"/>
    <property type="molecule type" value="mRNA"/>
</dbReference>
<dbReference type="EMBL" id="BC013688">
    <property type="protein sequence ID" value="AAH13688.1"/>
    <property type="molecule type" value="mRNA"/>
</dbReference>
<dbReference type="EMBL" id="BC052157">
    <property type="protein sequence ID" value="AAH52157.3"/>
    <property type="status" value="ALT_INIT"/>
    <property type="molecule type" value="mRNA"/>
</dbReference>
<dbReference type="RefSeq" id="NP_038739.2">
    <property type="nucleotide sequence ID" value="NM_013711.3"/>
</dbReference>
<dbReference type="PDB" id="1ZDL">
    <property type="method" value="X-ray"/>
    <property type="resolution" value="3.00 A"/>
    <property type="chains" value="A=31-522"/>
</dbReference>
<dbReference type="PDB" id="1ZKQ">
    <property type="method" value="X-ray"/>
    <property type="resolution" value="2.60 A"/>
    <property type="chains" value="A=31-522"/>
</dbReference>
<dbReference type="PDB" id="3DGZ">
    <property type="method" value="X-ray"/>
    <property type="resolution" value="2.25 A"/>
    <property type="chains" value="A=34-521"/>
</dbReference>
<dbReference type="PDBsum" id="1ZDL"/>
<dbReference type="PDBsum" id="1ZKQ"/>
<dbReference type="PDBsum" id="3DGZ"/>
<dbReference type="SMR" id="Q9JLT4"/>
<dbReference type="BioGRID" id="205007">
    <property type="interactions" value="2"/>
</dbReference>
<dbReference type="FunCoup" id="Q9JLT4">
    <property type="interactions" value="345"/>
</dbReference>
<dbReference type="IntAct" id="Q9JLT4">
    <property type="interactions" value="2"/>
</dbReference>
<dbReference type="MINT" id="Q9JLT4"/>
<dbReference type="STRING" id="10090.ENSMUSP00000146030"/>
<dbReference type="GlyGen" id="Q9JLT4">
    <property type="glycosylation" value="1 site, 1 O-linked glycan (1 site)"/>
</dbReference>
<dbReference type="iPTMnet" id="Q9JLT4"/>
<dbReference type="PhosphoSitePlus" id="Q9JLT4"/>
<dbReference type="SwissPalm" id="Q9JLT4"/>
<dbReference type="jPOST" id="Q9JLT4"/>
<dbReference type="PaxDb" id="10090-ENSMUSP00000111269"/>
<dbReference type="PeptideAtlas" id="Q9JLT4"/>
<dbReference type="ProteomicsDB" id="298240">
    <molecule id="Q9JLT4-1"/>
</dbReference>
<dbReference type="ProteomicsDB" id="298241">
    <molecule id="Q9JLT4-2"/>
</dbReference>
<dbReference type="ProteomicsDB" id="298242">
    <molecule id="Q9JLT4-3"/>
</dbReference>
<dbReference type="ProteomicsDB" id="298243">
    <molecule id="Q9JLT4-4"/>
</dbReference>
<dbReference type="Pumba" id="Q9JLT4"/>
<dbReference type="DNASU" id="26462"/>
<dbReference type="GeneID" id="26462"/>
<dbReference type="KEGG" id="mmu:26462"/>
<dbReference type="UCSC" id="uc007ynx.1">
    <molecule id="Q9JLT4-3"/>
    <property type="organism name" value="mouse"/>
</dbReference>
<dbReference type="UCSC" id="uc007yny.1">
    <molecule id="Q9JLT4-1"/>
    <property type="organism name" value="mouse"/>
</dbReference>
<dbReference type="AGR" id="MGI:1347023"/>
<dbReference type="CTD" id="10587"/>
<dbReference type="MGI" id="MGI:1347023">
    <property type="gene designation" value="Txnrd2"/>
</dbReference>
<dbReference type="eggNOG" id="KOG4716">
    <property type="taxonomic scope" value="Eukaryota"/>
</dbReference>
<dbReference type="HOGENOM" id="CLU_016755_2_4_1"/>
<dbReference type="InParanoid" id="Q9JLT4"/>
<dbReference type="OrthoDB" id="14544at9989"/>
<dbReference type="PhylomeDB" id="Q9JLT4"/>
<dbReference type="TreeFam" id="TF314782"/>
<dbReference type="BRENDA" id="1.8.1.9">
    <property type="organism ID" value="3474"/>
</dbReference>
<dbReference type="Reactome" id="R-MMU-3299685">
    <property type="pathway name" value="Detoxification of Reactive Oxygen Species"/>
</dbReference>
<dbReference type="BioGRID-ORCS" id="26462">
    <property type="hits" value="15 hits in 70 CRISPR screens"/>
</dbReference>
<dbReference type="ChiTaRS" id="Txnrd2">
    <property type="organism name" value="mouse"/>
</dbReference>
<dbReference type="EvolutionaryTrace" id="Q9JLT4"/>
<dbReference type="PRO" id="PR:Q9JLT4"/>
<dbReference type="Proteomes" id="UP000000589">
    <property type="component" value="Unplaced"/>
</dbReference>
<dbReference type="RNAct" id="Q9JLT4">
    <property type="molecule type" value="protein"/>
</dbReference>
<dbReference type="GO" id="GO:0005739">
    <property type="term" value="C:mitochondrion"/>
    <property type="evidence" value="ECO:0000314"/>
    <property type="project" value="UniProtKB"/>
</dbReference>
<dbReference type="GO" id="GO:0050660">
    <property type="term" value="F:flavin adenine dinucleotide binding"/>
    <property type="evidence" value="ECO:0007669"/>
    <property type="project" value="InterPro"/>
</dbReference>
<dbReference type="GO" id="GO:0042803">
    <property type="term" value="F:protein homodimerization activity"/>
    <property type="evidence" value="ECO:0000250"/>
    <property type="project" value="UniProtKB"/>
</dbReference>
<dbReference type="GO" id="GO:0004791">
    <property type="term" value="F:thioredoxin-disulfide reductase (NADPH) activity"/>
    <property type="evidence" value="ECO:0000250"/>
    <property type="project" value="UniProtKB"/>
</dbReference>
<dbReference type="GO" id="GO:0045454">
    <property type="term" value="P:cell redox homeostasis"/>
    <property type="evidence" value="ECO:0000250"/>
    <property type="project" value="UniProtKB"/>
</dbReference>
<dbReference type="GO" id="GO:0007507">
    <property type="term" value="P:heart development"/>
    <property type="evidence" value="ECO:0000315"/>
    <property type="project" value="MGI"/>
</dbReference>
<dbReference type="GO" id="GO:0030097">
    <property type="term" value="P:hemopoiesis"/>
    <property type="evidence" value="ECO:0000315"/>
    <property type="project" value="MGI"/>
</dbReference>
<dbReference type="GO" id="GO:0000305">
    <property type="term" value="P:response to oxygen radical"/>
    <property type="evidence" value="ECO:0000304"/>
    <property type="project" value="UniProtKB"/>
</dbReference>
<dbReference type="FunFam" id="3.50.50.60:FF:000190">
    <property type="entry name" value="Thioredoxin reductase"/>
    <property type="match status" value="1"/>
</dbReference>
<dbReference type="FunFam" id="3.30.390.30:FF:000004">
    <property type="entry name" value="Thioredoxin reductase 1, cytoplasmic"/>
    <property type="match status" value="1"/>
</dbReference>
<dbReference type="Gene3D" id="3.30.390.30">
    <property type="match status" value="1"/>
</dbReference>
<dbReference type="Gene3D" id="3.50.50.60">
    <property type="entry name" value="FAD/NAD(P)-binding domain"/>
    <property type="match status" value="2"/>
</dbReference>
<dbReference type="InterPro" id="IPR036188">
    <property type="entry name" value="FAD/NAD-bd_sf"/>
</dbReference>
<dbReference type="InterPro" id="IPR023753">
    <property type="entry name" value="FAD/NAD-binding_dom"/>
</dbReference>
<dbReference type="InterPro" id="IPR016156">
    <property type="entry name" value="FAD/NAD-linked_Rdtase_dimer_sf"/>
</dbReference>
<dbReference type="InterPro" id="IPR046952">
    <property type="entry name" value="GSHR/TRXR-like"/>
</dbReference>
<dbReference type="InterPro" id="IPR001100">
    <property type="entry name" value="Pyr_nuc-diS_OxRdtase"/>
</dbReference>
<dbReference type="InterPro" id="IPR004099">
    <property type="entry name" value="Pyr_nucl-diS_OxRdtase_dimer"/>
</dbReference>
<dbReference type="InterPro" id="IPR012999">
    <property type="entry name" value="Pyr_OxRdtase_I_AS"/>
</dbReference>
<dbReference type="InterPro" id="IPR006338">
    <property type="entry name" value="Thioredoxin/glutathione_Rdtase"/>
</dbReference>
<dbReference type="NCBIfam" id="TIGR01438">
    <property type="entry name" value="TGR"/>
    <property type="match status" value="1"/>
</dbReference>
<dbReference type="PANTHER" id="PTHR42737">
    <property type="entry name" value="GLUTATHIONE REDUCTASE"/>
    <property type="match status" value="1"/>
</dbReference>
<dbReference type="PANTHER" id="PTHR42737:SF7">
    <property type="entry name" value="THIOREDOXIN-DISULFIDE REDUCTASE"/>
    <property type="match status" value="1"/>
</dbReference>
<dbReference type="Pfam" id="PF07992">
    <property type="entry name" value="Pyr_redox_2"/>
    <property type="match status" value="1"/>
</dbReference>
<dbReference type="Pfam" id="PF02852">
    <property type="entry name" value="Pyr_redox_dim"/>
    <property type="match status" value="1"/>
</dbReference>
<dbReference type="PIRSF" id="PIRSF000350">
    <property type="entry name" value="Mercury_reductase_MerA"/>
    <property type="match status" value="1"/>
</dbReference>
<dbReference type="PRINTS" id="PR00368">
    <property type="entry name" value="FADPNR"/>
</dbReference>
<dbReference type="PRINTS" id="PR00411">
    <property type="entry name" value="PNDRDTASEI"/>
</dbReference>
<dbReference type="SUPFAM" id="SSF51905">
    <property type="entry name" value="FAD/NAD(P)-binding domain"/>
    <property type="match status" value="1"/>
</dbReference>
<dbReference type="SUPFAM" id="SSF55424">
    <property type="entry name" value="FAD/NAD-linked reductases, dimerisation (C-terminal) domain"/>
    <property type="match status" value="1"/>
</dbReference>
<dbReference type="PROSITE" id="PS00076">
    <property type="entry name" value="PYRIDINE_REDOX_1"/>
    <property type="match status" value="1"/>
</dbReference>
<sequence length="524" mass="56603">MVAAMVAALRGPSRRFRPRTRALTRGTRGAASAAGGQQSFDLLVIGGGSGGLACAKEAAQLGKKVAVADYVEPSPRGTKWGLGGTCVNVGCIPKKLMHQAALLGGMIRDAHHYGWEVAQPVQHNWKTMAEAVQNHVKSLNWGHRVQLQDRKVKYFNIKASFVDEHTVRGVDKGGKATLLSAEHIVIATGGRPRYPTQVKGALEYGITSDDIFWLKESPGKTLVVGASYVALECAGFLTGIGLDTTVMMRSIPLRGFDQQMSSLVTEHMESHGTQFLKGCVPSHIKKLPTNQLQVTWEDHASGKEDTGTFDTVLWAIGRVPETRTLNLEKAGISTNPKNQKIIVDAQEATSVPHIYAIGDVAEGRPELTPTAIKAGKLLAQRLFGKSSTLMDYSNVPTTVFTPLEYGCVGLSEEEAVALHGQEHVEVYHAYYKPLEFTVADRDASQCYIKMVCMREPPQLVLGLHFLGPNAGEVTQGFALGIKCGASYAQVMQTVGIHPTCSEEVVKLHISKRSGLEPTVTGCUG</sequence>
<organism evidence="14">
    <name type="scientific">Mus musculus</name>
    <name type="common">Mouse</name>
    <dbReference type="NCBI Taxonomy" id="10090"/>
    <lineage>
        <taxon>Eukaryota</taxon>
        <taxon>Metazoa</taxon>
        <taxon>Chordata</taxon>
        <taxon>Craniata</taxon>
        <taxon>Vertebrata</taxon>
        <taxon>Euteleostomi</taxon>
        <taxon>Mammalia</taxon>
        <taxon>Eutheria</taxon>
        <taxon>Euarchontoglires</taxon>
        <taxon>Glires</taxon>
        <taxon>Rodentia</taxon>
        <taxon>Myomorpha</taxon>
        <taxon>Muroidea</taxon>
        <taxon>Muridae</taxon>
        <taxon>Murinae</taxon>
        <taxon>Mus</taxon>
        <taxon>Mus</taxon>
    </lineage>
</organism>
<reference evidence="13" key="1">
    <citation type="journal article" date="1999" name="Biochim. Biophys. Acta">
        <title>cDNA cloning, expression and chromosomal localization of the mouse mitochondrial thioredoxin reductase gene.</title>
        <authorList>
            <person name="Miranda-Vizuete A."/>
            <person name="Damdimopoulos A.E."/>
            <person name="Spyrou G."/>
        </authorList>
    </citation>
    <scope>NUCLEOTIDE SEQUENCE [MRNA] (ISOFORM 1)</scope>
    <scope>TISSUE SPECIFICITY</scope>
    <source>
        <tissue>Liver</tissue>
    </source>
</reference>
<reference evidence="13" key="2">
    <citation type="journal article" date="2000" name="Gene">
        <title>Molecular cloning of mouse thioredoxin reductases.</title>
        <authorList>
            <person name="Kawai H."/>
            <person name="Ota T."/>
            <person name="Suzuki F."/>
            <person name="Tatsuka M."/>
        </authorList>
    </citation>
    <scope>NUCLEOTIDE SEQUENCE (ISOFORM 1)</scope>
    <scope>TISSUE SPECIFICITY</scope>
    <scope>SUBCELLULAR LOCATION</scope>
    <source>
        <tissue>Thymocyte</tissue>
    </source>
</reference>
<reference evidence="13" key="3">
    <citation type="journal article" date="1999" name="J. Biol. Chem.">
        <title>Redox regulation of cell signaling by selenocysteine in mammalian thioredoxin reductases.</title>
        <authorList>
            <person name="Sun Q.-A."/>
            <person name="Wu Y."/>
            <person name="Zappacosta F."/>
            <person name="Jeang K.-T."/>
            <person name="Lee B.J."/>
            <person name="Hatfield D.L."/>
            <person name="Gladyshev V.N."/>
        </authorList>
    </citation>
    <scope>NUCLEOTIDE SEQUENCE [MRNA] (ISOFORM 1)</scope>
    <scope>PROTEIN SEQUENCE OF 35-44; 65-76; 255-277 AND 341-373</scope>
    <scope>TISSUE SPECIFICITY</scope>
    <source>
        <tissue>Liver</tissue>
    </source>
</reference>
<reference key="4">
    <citation type="journal article" date="2002" name="Mol. Cells">
        <title>Genomic organization and identification of a novel alternative splicing variant of mouse mitochondrial thioredoxin reductase (TrxR2) gene.</title>
        <authorList>
            <person name="Miranda-Vizuete A."/>
            <person name="Spyrou G."/>
        </authorList>
    </citation>
    <scope>NUCLEOTIDE SEQUENCE [GENOMIC DNA / MRNA] (ISOFORMS 1 AND 4)</scope>
    <scope>ALTERNATIVE SPLICING</scope>
    <source>
        <strain>BALB/cJ</strain>
    </source>
</reference>
<reference key="5">
    <citation type="journal article" date="2004" name="Genome Res.">
        <title>The status, quality, and expansion of the NIH full-length cDNA project: the Mammalian Gene Collection (MGC).</title>
        <authorList>
            <consortium name="The MGC Project Team"/>
        </authorList>
    </citation>
    <scope>NUCLEOTIDE SEQUENCE [LARGE SCALE MRNA] (ISOFORMS 1 AND 3)</scope>
    <source>
        <strain>FVB/N</strain>
        <tissue>Limb</tissue>
        <tissue>Mammary tumor</tissue>
    </source>
</reference>
<reference key="6">
    <citation type="journal article" date="2001" name="J. Biol. Chem.">
        <title>Heterogeneity within animal thioredoxin reductases: evidence for alternative first exon splicing.</title>
        <authorList>
            <person name="Sun Q.-A."/>
            <person name="Zappacosta F."/>
            <person name="Factor V.M."/>
            <person name="Wirth P.J."/>
            <person name="Hatfield D.L."/>
            <person name="Gladyshev V.N."/>
        </authorList>
    </citation>
    <scope>ALTERNATIVE SPLICING</scope>
</reference>
<reference key="7">
    <citation type="journal article" date="2010" name="Cell">
        <title>A tissue-specific atlas of mouse protein phosphorylation and expression.</title>
        <authorList>
            <person name="Huttlin E.L."/>
            <person name="Jedrychowski M.P."/>
            <person name="Elias J.E."/>
            <person name="Goswami T."/>
            <person name="Rad R."/>
            <person name="Beausoleil S.A."/>
            <person name="Villen J."/>
            <person name="Haas W."/>
            <person name="Sowa M.E."/>
            <person name="Gygi S.P."/>
        </authorList>
    </citation>
    <scope>IDENTIFICATION BY MASS SPECTROMETRY [LARGE SCALE ANALYSIS]</scope>
    <source>
        <tissue>Brain</tissue>
        <tissue>Brown adipose tissue</tissue>
        <tissue>Heart</tissue>
        <tissue>Kidney</tissue>
        <tissue>Liver</tissue>
        <tissue>Pancreas</tissue>
        <tissue>Spleen</tissue>
        <tissue>Testis</tissue>
    </source>
</reference>
<reference key="8">
    <citation type="journal article" date="2013" name="Mol. Cell">
        <title>SIRT5-mediated lysine desuccinylation impacts diverse metabolic pathways.</title>
        <authorList>
            <person name="Park J."/>
            <person name="Chen Y."/>
            <person name="Tishkoff D.X."/>
            <person name="Peng C."/>
            <person name="Tan M."/>
            <person name="Dai L."/>
            <person name="Xie Z."/>
            <person name="Zhang Y."/>
            <person name="Zwaans B.M."/>
            <person name="Skinner M.E."/>
            <person name="Lombard D.B."/>
            <person name="Zhao Y."/>
        </authorList>
    </citation>
    <scope>SUCCINYLATION [LARGE SCALE ANALYSIS] AT LYS-79; LYS-175 AND LYS-329</scope>
    <scope>IDENTIFICATION BY MASS SPECTROMETRY [LARGE SCALE ANALYSIS]</scope>
    <source>
        <tissue>Liver</tissue>
    </source>
</reference>
<proteinExistence type="evidence at protein level"/>
<protein>
    <recommendedName>
        <fullName evidence="13">Thioredoxin reductase 2, mitochondrial</fullName>
        <ecNumber evidence="3 5">1.8.1.9</ecNumber>
    </recommendedName>
    <alternativeName>
        <fullName>Thioredoxin reductase TR3</fullName>
    </alternativeName>
</protein>